<sequence>MLGTDRCVVEEWLSEFKALPDTQITSYAATLHRKKTLVPALYKVIQDSNNELLEPVCHQLFELYRSSEVRLKRFTLQFLPELMWVYLRLTVSRDRQSNGCIEALLLGIYNLEIADKDGNNKVLSFTIPSLSKPSIYHEPSTIGSMALTEGALCQHDLIRVVYSDLHPQRETFTAQNRFEVLSFLMLCYNSAIVYMPASSYQSLCRMGSRVCVSGFPRQHEKHWKELCGRIVLDPEFMVQLLTGVYYAMYNGQWDLGQEVLDDIIYRAQLELFSQPLLVANAMKNSLPFDAPDSTQEGQKVLKVEVTPTVPRISRTAITTASIRRHRWRREGAEGVNGGEESVNLNDADEGFSSGASLSSQPIGTKPSSSSQRGSLRKVATGRSAKDKETASAIKSSESPRDSVVRKQYVQQPTDLSVDSVELTPMKKHLSLPAGQVVPKINSLSLIRTASASSSKSFDYVNGSQASTSIGVGTEGGTNLAANNANRYSTVSLQEDRLGQAGEGKELLSPGAPLTKQSRSPSFNMQLISQV</sequence>
<feature type="chain" id="PRO_0000278094" description="Hyccin 2">
    <location>
        <begin position="1"/>
        <end position="530"/>
    </location>
</feature>
<feature type="region of interest" description="Disordered" evidence="3">
    <location>
        <begin position="328"/>
        <end position="410"/>
    </location>
</feature>
<feature type="region of interest" description="Disordered" evidence="3">
    <location>
        <begin position="502"/>
        <end position="530"/>
    </location>
</feature>
<feature type="compositionally biased region" description="Polar residues" evidence="3">
    <location>
        <begin position="353"/>
        <end position="373"/>
    </location>
</feature>
<feature type="compositionally biased region" description="Polar residues" evidence="3">
    <location>
        <begin position="514"/>
        <end position="530"/>
    </location>
</feature>
<feature type="modified residue" description="Phosphothreonine" evidence="8">
    <location>
        <position position="30"/>
    </location>
</feature>
<feature type="modified residue" description="Phosphothreonine" evidence="8">
    <location>
        <position position="306"/>
    </location>
</feature>
<feature type="modified residue" description="Phosphoserine" evidence="8 9">
    <location>
        <position position="321"/>
    </location>
</feature>
<feature type="modified residue" description="Phosphoserine" evidence="1">
    <location>
        <position position="341"/>
    </location>
</feature>
<feature type="modified residue" description="Phosphoserine" evidence="8">
    <location>
        <position position="430"/>
    </location>
</feature>
<feature type="modified residue" description="Phosphoserine" evidence="8">
    <location>
        <position position="442"/>
    </location>
</feature>
<feature type="modified residue" description="Phosphoserine" evidence="8">
    <location>
        <position position="444"/>
    </location>
</feature>
<feature type="modified residue" description="Phosphoserine" evidence="8">
    <location>
        <position position="491"/>
    </location>
</feature>
<gene>
    <name evidence="7" type="primary">HYCC2</name>
    <name type="synonym">FAM126B</name>
</gene>
<evidence type="ECO:0000250" key="1">
    <source>
        <dbReference type="UniProtKB" id="Q8C729"/>
    </source>
</evidence>
<evidence type="ECO:0000250" key="2">
    <source>
        <dbReference type="UniProtKB" id="Q9BYI3"/>
    </source>
</evidence>
<evidence type="ECO:0000256" key="3">
    <source>
        <dbReference type="SAM" id="MobiDB-lite"/>
    </source>
</evidence>
<evidence type="ECO:0000269" key="4">
    <source>
    </source>
</evidence>
<evidence type="ECO:0000305" key="5"/>
<evidence type="ECO:0000305" key="6">
    <source>
    </source>
</evidence>
<evidence type="ECO:0000312" key="7">
    <source>
        <dbReference type="HGNC" id="HGNC:28593"/>
    </source>
</evidence>
<evidence type="ECO:0007744" key="8">
    <source>
    </source>
</evidence>
<evidence type="ECO:0007744" key="9">
    <source>
    </source>
</evidence>
<keyword id="KW-1003">Cell membrane</keyword>
<keyword id="KW-0963">Cytoplasm</keyword>
<keyword id="KW-0472">Membrane</keyword>
<keyword id="KW-0597">Phosphoprotein</keyword>
<keyword id="KW-1267">Proteomics identification</keyword>
<keyword id="KW-1185">Reference proteome</keyword>
<proteinExistence type="evidence at protein level"/>
<dbReference type="EMBL" id="AK315104">
    <property type="protein sequence ID" value="BAG37564.1"/>
    <property type="molecule type" value="mRNA"/>
</dbReference>
<dbReference type="EMBL" id="AL833403">
    <property type="status" value="NOT_ANNOTATED_CDS"/>
    <property type="molecule type" value="mRNA"/>
</dbReference>
<dbReference type="EMBL" id="AC005037">
    <property type="protein sequence ID" value="AAY14726.1"/>
    <property type="molecule type" value="Genomic_DNA"/>
</dbReference>
<dbReference type="EMBL" id="AC007272">
    <property type="protein sequence ID" value="AAX88971.1"/>
    <property type="molecule type" value="Genomic_DNA"/>
</dbReference>
<dbReference type="EMBL" id="CH471063">
    <property type="protein sequence ID" value="EAW70232.1"/>
    <property type="molecule type" value="Genomic_DNA"/>
</dbReference>
<dbReference type="EMBL" id="BC039295">
    <property type="protein sequence ID" value="AAH39295.1"/>
    <property type="molecule type" value="mRNA"/>
</dbReference>
<dbReference type="CCDS" id="CCDS2335.1"/>
<dbReference type="RefSeq" id="NP_001308547.1">
    <property type="nucleotide sequence ID" value="NM_001321618.1"/>
</dbReference>
<dbReference type="RefSeq" id="NP_001308548.1">
    <property type="nucleotide sequence ID" value="NM_001321619.2"/>
</dbReference>
<dbReference type="RefSeq" id="NP_001308550.1">
    <property type="nucleotide sequence ID" value="NM_001321621.2"/>
</dbReference>
<dbReference type="RefSeq" id="NP_001308551.1">
    <property type="nucleotide sequence ID" value="NM_001321622.2"/>
</dbReference>
<dbReference type="RefSeq" id="NP_001308556.1">
    <property type="nucleotide sequence ID" value="NM_001321627.1"/>
</dbReference>
<dbReference type="RefSeq" id="NP_776183.1">
    <property type="nucleotide sequence ID" value="NM_173822.5"/>
</dbReference>
<dbReference type="RefSeq" id="XP_016859370.1">
    <property type="nucleotide sequence ID" value="XM_017003881.2"/>
</dbReference>
<dbReference type="RefSeq" id="XP_047299959.1">
    <property type="nucleotide sequence ID" value="XM_047444003.1"/>
</dbReference>
<dbReference type="RefSeq" id="XP_047299960.1">
    <property type="nucleotide sequence ID" value="XM_047444004.1"/>
</dbReference>
<dbReference type="RefSeq" id="XP_054197490.1">
    <property type="nucleotide sequence ID" value="XM_054341515.1"/>
</dbReference>
<dbReference type="RefSeq" id="XP_054197491.1">
    <property type="nucleotide sequence ID" value="XM_054341516.1"/>
</dbReference>
<dbReference type="RefSeq" id="XP_054197492.1">
    <property type="nucleotide sequence ID" value="XM_054341517.1"/>
</dbReference>
<dbReference type="SMR" id="Q8IXS8"/>
<dbReference type="BioGRID" id="130030">
    <property type="interactions" value="17"/>
</dbReference>
<dbReference type="FunCoup" id="Q8IXS8">
    <property type="interactions" value="1182"/>
</dbReference>
<dbReference type="IntAct" id="Q8IXS8">
    <property type="interactions" value="14"/>
</dbReference>
<dbReference type="MINT" id="Q8IXS8"/>
<dbReference type="STRING" id="9606.ENSP00000393667"/>
<dbReference type="GlyGen" id="Q8IXS8">
    <property type="glycosylation" value="2 sites, 1 O-linked glycan (2 sites)"/>
</dbReference>
<dbReference type="iPTMnet" id="Q8IXS8"/>
<dbReference type="PhosphoSitePlus" id="Q8IXS8"/>
<dbReference type="BioMuta" id="FAM126B"/>
<dbReference type="DMDM" id="74728235"/>
<dbReference type="jPOST" id="Q8IXS8"/>
<dbReference type="MassIVE" id="Q8IXS8"/>
<dbReference type="PaxDb" id="9606-ENSP00000393667"/>
<dbReference type="PeptideAtlas" id="Q8IXS8"/>
<dbReference type="ProteomicsDB" id="71059"/>
<dbReference type="Pumba" id="Q8IXS8"/>
<dbReference type="Antibodypedia" id="50921">
    <property type="antibodies" value="42 antibodies from 9 providers"/>
</dbReference>
<dbReference type="DNASU" id="285172"/>
<dbReference type="Ensembl" id="ENST00000418596.7">
    <property type="protein sequence ID" value="ENSP00000393667.2"/>
    <property type="gene ID" value="ENSG00000155744.10"/>
</dbReference>
<dbReference type="GeneID" id="285172"/>
<dbReference type="KEGG" id="hsa:285172"/>
<dbReference type="UCSC" id="uc002uws.4">
    <property type="organism name" value="human"/>
</dbReference>
<dbReference type="AGR" id="HGNC:28593"/>
<dbReference type="CTD" id="285172"/>
<dbReference type="DisGeNET" id="285172"/>
<dbReference type="GeneCards" id="HYCC2"/>
<dbReference type="HGNC" id="HGNC:28593">
    <property type="gene designation" value="HYCC2"/>
</dbReference>
<dbReference type="HPA" id="ENSG00000155744">
    <property type="expression patterns" value="Low tissue specificity"/>
</dbReference>
<dbReference type="neXtProt" id="NX_Q8IXS8"/>
<dbReference type="OpenTargets" id="ENSG00000155744"/>
<dbReference type="PharmGKB" id="PA162385879"/>
<dbReference type="VEuPathDB" id="HostDB:ENSG00000155744"/>
<dbReference type="eggNOG" id="KOG4688">
    <property type="taxonomic scope" value="Eukaryota"/>
</dbReference>
<dbReference type="GeneTree" id="ENSGT00390000011295"/>
<dbReference type="HOGENOM" id="CLU_027457_3_0_1"/>
<dbReference type="InParanoid" id="Q8IXS8"/>
<dbReference type="OMA" id="SIYHEXF"/>
<dbReference type="OrthoDB" id="18937at2759"/>
<dbReference type="PAN-GO" id="Q8IXS8">
    <property type="GO annotations" value="3 GO annotations based on evolutionary models"/>
</dbReference>
<dbReference type="PhylomeDB" id="Q8IXS8"/>
<dbReference type="TreeFam" id="TF317153"/>
<dbReference type="PathwayCommons" id="Q8IXS8"/>
<dbReference type="SignaLink" id="Q8IXS8"/>
<dbReference type="BioGRID-ORCS" id="285172">
    <property type="hits" value="21 hits in 1163 CRISPR screens"/>
</dbReference>
<dbReference type="ChiTaRS" id="FAM126B">
    <property type="organism name" value="human"/>
</dbReference>
<dbReference type="GenomeRNAi" id="285172"/>
<dbReference type="Pharos" id="Q8IXS8">
    <property type="development level" value="Tdark"/>
</dbReference>
<dbReference type="PRO" id="PR:Q8IXS8"/>
<dbReference type="Proteomes" id="UP000005640">
    <property type="component" value="Chromosome 2"/>
</dbReference>
<dbReference type="RNAct" id="Q8IXS8">
    <property type="molecule type" value="protein"/>
</dbReference>
<dbReference type="Bgee" id="ENSG00000155744">
    <property type="expression patterns" value="Expressed in buccal mucosa cell and 192 other cell types or tissues"/>
</dbReference>
<dbReference type="ExpressionAtlas" id="Q8IXS8">
    <property type="expression patterns" value="baseline and differential"/>
</dbReference>
<dbReference type="GO" id="GO:0005829">
    <property type="term" value="C:cytosol"/>
    <property type="evidence" value="ECO:0007669"/>
    <property type="project" value="UniProtKB-SubCell"/>
</dbReference>
<dbReference type="GO" id="GO:0005886">
    <property type="term" value="C:plasma membrane"/>
    <property type="evidence" value="ECO:0000318"/>
    <property type="project" value="GO_Central"/>
</dbReference>
<dbReference type="GO" id="GO:0046854">
    <property type="term" value="P:phosphatidylinositol phosphate biosynthetic process"/>
    <property type="evidence" value="ECO:0000318"/>
    <property type="project" value="GO_Central"/>
</dbReference>
<dbReference type="GO" id="GO:0072659">
    <property type="term" value="P:protein localization to plasma membrane"/>
    <property type="evidence" value="ECO:0000318"/>
    <property type="project" value="GO_Central"/>
</dbReference>
<dbReference type="InterPro" id="IPR018619">
    <property type="entry name" value="Hyccin"/>
</dbReference>
<dbReference type="PANTHER" id="PTHR31220:SF3">
    <property type="entry name" value="HYCCIN 2"/>
    <property type="match status" value="1"/>
</dbReference>
<dbReference type="PANTHER" id="PTHR31220">
    <property type="entry name" value="HYCCIN RELATED"/>
    <property type="match status" value="1"/>
</dbReference>
<dbReference type="Pfam" id="PF09790">
    <property type="entry name" value="Hyccin"/>
    <property type="match status" value="1"/>
</dbReference>
<name>HYCC2_HUMAN</name>
<accession>Q8IXS8</accession>
<accession>B2RCG7</accession>
<accession>Q4ZG87</accession>
<accession>Q53TX6</accession>
<comment type="function">
    <text evidence="6">Component of a complex required to localize phosphatidylinositol 4-kinase (PI4K) to the plasma membrane.</text>
</comment>
<comment type="subunit">
    <text evidence="4">Component of a phosphatidylinositol 4-kinase (PI4K) complex, composed of PI4KA, EFR3 (EFR3A or EFR3B), TTC7 (TTC7A or TTC7B) and HYCC (HYCC1 or HYCC2).</text>
</comment>
<comment type="interaction">
    <interactant intactId="EBI-8787606">
        <id>Q8IXS8</id>
    </interactant>
    <interactant intactId="EBI-618309">
        <id>Q08379</id>
        <label>GOLGA2</label>
    </interactant>
    <organismsDiffer>false</organismsDiffer>
    <experiments>3</experiments>
</comment>
<comment type="interaction">
    <interactant intactId="EBI-8787606">
        <id>Q8IXS8</id>
    </interactant>
    <interactant intactId="EBI-2864512">
        <id>P50221</id>
        <label>MEOX1</label>
    </interactant>
    <organismsDiffer>false</organismsDiffer>
    <experiments>3</experiments>
</comment>
<comment type="interaction">
    <interactant intactId="EBI-8787606">
        <id>Q8IXS8</id>
    </interactant>
    <interactant intactId="EBI-719493">
        <id>P14373</id>
        <label>TRIM27</label>
    </interactant>
    <organismsDiffer>false</organismsDiffer>
    <experiments>3</experiments>
</comment>
<comment type="interaction">
    <interactant intactId="EBI-8787606">
        <id>Q8IXS8</id>
    </interactant>
    <interactant intactId="EBI-12006098">
        <id>Q86TV6</id>
        <label>TTC7B</label>
    </interactant>
    <organismsDiffer>false</organismsDiffer>
    <experiments>3</experiments>
</comment>
<comment type="subcellular location">
    <subcellularLocation>
        <location evidence="2">Cytoplasm</location>
        <location evidence="2">Cytosol</location>
    </subcellularLocation>
    <subcellularLocation>
        <location evidence="2">Cell membrane</location>
    </subcellularLocation>
</comment>
<comment type="similarity">
    <text evidence="5">Belongs to the Hyccin family.</text>
</comment>
<protein>
    <recommendedName>
        <fullName evidence="5">Hyccin 2</fullName>
    </recommendedName>
</protein>
<reference key="1">
    <citation type="journal article" date="2004" name="Nat. Genet.">
        <title>Complete sequencing and characterization of 21,243 full-length human cDNAs.</title>
        <authorList>
            <person name="Ota T."/>
            <person name="Suzuki Y."/>
            <person name="Nishikawa T."/>
            <person name="Otsuki T."/>
            <person name="Sugiyama T."/>
            <person name="Irie R."/>
            <person name="Wakamatsu A."/>
            <person name="Hayashi K."/>
            <person name="Sato H."/>
            <person name="Nagai K."/>
            <person name="Kimura K."/>
            <person name="Makita H."/>
            <person name="Sekine M."/>
            <person name="Obayashi M."/>
            <person name="Nishi T."/>
            <person name="Shibahara T."/>
            <person name="Tanaka T."/>
            <person name="Ishii S."/>
            <person name="Yamamoto J."/>
            <person name="Saito K."/>
            <person name="Kawai Y."/>
            <person name="Isono Y."/>
            <person name="Nakamura Y."/>
            <person name="Nagahari K."/>
            <person name="Murakami K."/>
            <person name="Yasuda T."/>
            <person name="Iwayanagi T."/>
            <person name="Wagatsuma M."/>
            <person name="Shiratori A."/>
            <person name="Sudo H."/>
            <person name="Hosoiri T."/>
            <person name="Kaku Y."/>
            <person name="Kodaira H."/>
            <person name="Kondo H."/>
            <person name="Sugawara M."/>
            <person name="Takahashi M."/>
            <person name="Kanda K."/>
            <person name="Yokoi T."/>
            <person name="Furuya T."/>
            <person name="Kikkawa E."/>
            <person name="Omura Y."/>
            <person name="Abe K."/>
            <person name="Kamihara K."/>
            <person name="Katsuta N."/>
            <person name="Sato K."/>
            <person name="Tanikawa M."/>
            <person name="Yamazaki M."/>
            <person name="Ninomiya K."/>
            <person name="Ishibashi T."/>
            <person name="Yamashita H."/>
            <person name="Murakawa K."/>
            <person name="Fujimori K."/>
            <person name="Tanai H."/>
            <person name="Kimata M."/>
            <person name="Watanabe M."/>
            <person name="Hiraoka S."/>
            <person name="Chiba Y."/>
            <person name="Ishida S."/>
            <person name="Ono Y."/>
            <person name="Takiguchi S."/>
            <person name="Watanabe S."/>
            <person name="Yosida M."/>
            <person name="Hotuta T."/>
            <person name="Kusano J."/>
            <person name="Kanehori K."/>
            <person name="Takahashi-Fujii A."/>
            <person name="Hara H."/>
            <person name="Tanase T.-O."/>
            <person name="Nomura Y."/>
            <person name="Togiya S."/>
            <person name="Komai F."/>
            <person name="Hara R."/>
            <person name="Takeuchi K."/>
            <person name="Arita M."/>
            <person name="Imose N."/>
            <person name="Musashino K."/>
            <person name="Yuuki H."/>
            <person name="Oshima A."/>
            <person name="Sasaki N."/>
            <person name="Aotsuka S."/>
            <person name="Yoshikawa Y."/>
            <person name="Matsunawa H."/>
            <person name="Ichihara T."/>
            <person name="Shiohata N."/>
            <person name="Sano S."/>
            <person name="Moriya S."/>
            <person name="Momiyama H."/>
            <person name="Satoh N."/>
            <person name="Takami S."/>
            <person name="Terashima Y."/>
            <person name="Suzuki O."/>
            <person name="Nakagawa S."/>
            <person name="Senoh A."/>
            <person name="Mizoguchi H."/>
            <person name="Goto Y."/>
            <person name="Shimizu F."/>
            <person name="Wakebe H."/>
            <person name="Hishigaki H."/>
            <person name="Watanabe T."/>
            <person name="Sugiyama A."/>
            <person name="Takemoto M."/>
            <person name="Kawakami B."/>
            <person name="Yamazaki M."/>
            <person name="Watanabe K."/>
            <person name="Kumagai A."/>
            <person name="Itakura S."/>
            <person name="Fukuzumi Y."/>
            <person name="Fujimori Y."/>
            <person name="Komiyama M."/>
            <person name="Tashiro H."/>
            <person name="Tanigami A."/>
            <person name="Fujiwara T."/>
            <person name="Ono T."/>
            <person name="Yamada K."/>
            <person name="Fujii Y."/>
            <person name="Ozaki K."/>
            <person name="Hirao M."/>
            <person name="Ohmori Y."/>
            <person name="Kawabata A."/>
            <person name="Hikiji T."/>
            <person name="Kobatake N."/>
            <person name="Inagaki H."/>
            <person name="Ikema Y."/>
            <person name="Okamoto S."/>
            <person name="Okitani R."/>
            <person name="Kawakami T."/>
            <person name="Noguchi S."/>
            <person name="Itoh T."/>
            <person name="Shigeta K."/>
            <person name="Senba T."/>
            <person name="Matsumura K."/>
            <person name="Nakajima Y."/>
            <person name="Mizuno T."/>
            <person name="Morinaga M."/>
            <person name="Sasaki M."/>
            <person name="Togashi T."/>
            <person name="Oyama M."/>
            <person name="Hata H."/>
            <person name="Watanabe M."/>
            <person name="Komatsu T."/>
            <person name="Mizushima-Sugano J."/>
            <person name="Satoh T."/>
            <person name="Shirai Y."/>
            <person name="Takahashi Y."/>
            <person name="Nakagawa K."/>
            <person name="Okumura K."/>
            <person name="Nagase T."/>
            <person name="Nomura N."/>
            <person name="Kikuchi H."/>
            <person name="Masuho Y."/>
            <person name="Yamashita R."/>
            <person name="Nakai K."/>
            <person name="Yada T."/>
            <person name="Nakamura Y."/>
            <person name="Ohara O."/>
            <person name="Isogai T."/>
            <person name="Sugano S."/>
        </authorList>
    </citation>
    <scope>NUCLEOTIDE SEQUENCE [LARGE SCALE MRNA]</scope>
    <source>
        <tissue>Fetal brain</tissue>
    </source>
</reference>
<reference key="2">
    <citation type="journal article" date="2007" name="BMC Genomics">
        <title>The full-ORF clone resource of the German cDNA consortium.</title>
        <authorList>
            <person name="Bechtel S."/>
            <person name="Rosenfelder H."/>
            <person name="Duda A."/>
            <person name="Schmidt C.P."/>
            <person name="Ernst U."/>
            <person name="Wellenreuther R."/>
            <person name="Mehrle A."/>
            <person name="Schuster C."/>
            <person name="Bahr A."/>
            <person name="Bloecker H."/>
            <person name="Heubner D."/>
            <person name="Hoerlein A."/>
            <person name="Michel G."/>
            <person name="Wedler H."/>
            <person name="Koehrer K."/>
            <person name="Ottenwaelder B."/>
            <person name="Poustka A."/>
            <person name="Wiemann S."/>
            <person name="Schupp I."/>
        </authorList>
    </citation>
    <scope>NUCLEOTIDE SEQUENCE [LARGE SCALE MRNA]</scope>
    <source>
        <tissue>Adipose tissue</tissue>
    </source>
</reference>
<reference key="3">
    <citation type="journal article" date="2005" name="Nature">
        <title>Generation and annotation of the DNA sequences of human chromosomes 2 and 4.</title>
        <authorList>
            <person name="Hillier L.W."/>
            <person name="Graves T.A."/>
            <person name="Fulton R.S."/>
            <person name="Fulton L.A."/>
            <person name="Pepin K.H."/>
            <person name="Minx P."/>
            <person name="Wagner-McPherson C."/>
            <person name="Layman D."/>
            <person name="Wylie K."/>
            <person name="Sekhon M."/>
            <person name="Becker M.C."/>
            <person name="Fewell G.A."/>
            <person name="Delehaunty K.D."/>
            <person name="Miner T.L."/>
            <person name="Nash W.E."/>
            <person name="Kremitzki C."/>
            <person name="Oddy L."/>
            <person name="Du H."/>
            <person name="Sun H."/>
            <person name="Bradshaw-Cordum H."/>
            <person name="Ali J."/>
            <person name="Carter J."/>
            <person name="Cordes M."/>
            <person name="Harris A."/>
            <person name="Isak A."/>
            <person name="van Brunt A."/>
            <person name="Nguyen C."/>
            <person name="Du F."/>
            <person name="Courtney L."/>
            <person name="Kalicki J."/>
            <person name="Ozersky P."/>
            <person name="Abbott S."/>
            <person name="Armstrong J."/>
            <person name="Belter E.A."/>
            <person name="Caruso L."/>
            <person name="Cedroni M."/>
            <person name="Cotton M."/>
            <person name="Davidson T."/>
            <person name="Desai A."/>
            <person name="Elliott G."/>
            <person name="Erb T."/>
            <person name="Fronick C."/>
            <person name="Gaige T."/>
            <person name="Haakenson W."/>
            <person name="Haglund K."/>
            <person name="Holmes A."/>
            <person name="Harkins R."/>
            <person name="Kim K."/>
            <person name="Kruchowski S.S."/>
            <person name="Strong C.M."/>
            <person name="Grewal N."/>
            <person name="Goyea E."/>
            <person name="Hou S."/>
            <person name="Levy A."/>
            <person name="Martinka S."/>
            <person name="Mead K."/>
            <person name="McLellan M.D."/>
            <person name="Meyer R."/>
            <person name="Randall-Maher J."/>
            <person name="Tomlinson C."/>
            <person name="Dauphin-Kohlberg S."/>
            <person name="Kozlowicz-Reilly A."/>
            <person name="Shah N."/>
            <person name="Swearengen-Shahid S."/>
            <person name="Snider J."/>
            <person name="Strong J.T."/>
            <person name="Thompson J."/>
            <person name="Yoakum M."/>
            <person name="Leonard S."/>
            <person name="Pearman C."/>
            <person name="Trani L."/>
            <person name="Radionenko M."/>
            <person name="Waligorski J.E."/>
            <person name="Wang C."/>
            <person name="Rock S.M."/>
            <person name="Tin-Wollam A.-M."/>
            <person name="Maupin R."/>
            <person name="Latreille P."/>
            <person name="Wendl M.C."/>
            <person name="Yang S.-P."/>
            <person name="Pohl C."/>
            <person name="Wallis J.W."/>
            <person name="Spieth J."/>
            <person name="Bieri T.A."/>
            <person name="Berkowicz N."/>
            <person name="Nelson J.O."/>
            <person name="Osborne J."/>
            <person name="Ding L."/>
            <person name="Meyer R."/>
            <person name="Sabo A."/>
            <person name="Shotland Y."/>
            <person name="Sinha P."/>
            <person name="Wohldmann P.E."/>
            <person name="Cook L.L."/>
            <person name="Hickenbotham M.T."/>
            <person name="Eldred J."/>
            <person name="Williams D."/>
            <person name="Jones T.A."/>
            <person name="She X."/>
            <person name="Ciccarelli F.D."/>
            <person name="Izaurralde E."/>
            <person name="Taylor J."/>
            <person name="Schmutz J."/>
            <person name="Myers R.M."/>
            <person name="Cox D.R."/>
            <person name="Huang X."/>
            <person name="McPherson J.D."/>
            <person name="Mardis E.R."/>
            <person name="Clifton S.W."/>
            <person name="Warren W.C."/>
            <person name="Chinwalla A.T."/>
            <person name="Eddy S.R."/>
            <person name="Marra M.A."/>
            <person name="Ovcharenko I."/>
            <person name="Furey T.S."/>
            <person name="Miller W."/>
            <person name="Eichler E.E."/>
            <person name="Bork P."/>
            <person name="Suyama M."/>
            <person name="Torrents D."/>
            <person name="Waterston R.H."/>
            <person name="Wilson R.K."/>
        </authorList>
    </citation>
    <scope>NUCLEOTIDE SEQUENCE [LARGE SCALE GENOMIC DNA]</scope>
</reference>
<reference key="4">
    <citation type="submission" date="2005-07" db="EMBL/GenBank/DDBJ databases">
        <authorList>
            <person name="Mural R.J."/>
            <person name="Istrail S."/>
            <person name="Sutton G.G."/>
            <person name="Florea L."/>
            <person name="Halpern A.L."/>
            <person name="Mobarry C.M."/>
            <person name="Lippert R."/>
            <person name="Walenz B."/>
            <person name="Shatkay H."/>
            <person name="Dew I."/>
            <person name="Miller J.R."/>
            <person name="Flanigan M.J."/>
            <person name="Edwards N.J."/>
            <person name="Bolanos R."/>
            <person name="Fasulo D."/>
            <person name="Halldorsson B.V."/>
            <person name="Hannenhalli S."/>
            <person name="Turner R."/>
            <person name="Yooseph S."/>
            <person name="Lu F."/>
            <person name="Nusskern D.R."/>
            <person name="Shue B.C."/>
            <person name="Zheng X.H."/>
            <person name="Zhong F."/>
            <person name="Delcher A.L."/>
            <person name="Huson D.H."/>
            <person name="Kravitz S.A."/>
            <person name="Mouchard L."/>
            <person name="Reinert K."/>
            <person name="Remington K.A."/>
            <person name="Clark A.G."/>
            <person name="Waterman M.S."/>
            <person name="Eichler E.E."/>
            <person name="Adams M.D."/>
            <person name="Hunkapiller M.W."/>
            <person name="Myers E.W."/>
            <person name="Venter J.C."/>
        </authorList>
    </citation>
    <scope>NUCLEOTIDE SEQUENCE [LARGE SCALE GENOMIC DNA]</scope>
</reference>
<reference key="5">
    <citation type="journal article" date="2004" name="Genome Res.">
        <title>The status, quality, and expansion of the NIH full-length cDNA project: the Mammalian Gene Collection (MGC).</title>
        <authorList>
            <consortium name="The MGC Project Team"/>
        </authorList>
    </citation>
    <scope>NUCLEOTIDE SEQUENCE [LARGE SCALE MRNA]</scope>
    <source>
        <tissue>Testis</tissue>
    </source>
</reference>
<reference key="6">
    <citation type="journal article" date="2013" name="J. Proteome Res.">
        <title>Toward a comprehensive characterization of a human cancer cell phosphoproteome.</title>
        <authorList>
            <person name="Zhou H."/>
            <person name="Di Palma S."/>
            <person name="Preisinger C."/>
            <person name="Peng M."/>
            <person name="Polat A.N."/>
            <person name="Heck A.J."/>
            <person name="Mohammed S."/>
        </authorList>
    </citation>
    <scope>PHOSPHORYLATION [LARGE SCALE ANALYSIS] AT THR-30; THR-306; SER-321; SER-430; SER-442; SER-444 AND SER-491</scope>
    <scope>IDENTIFICATION BY MASS SPECTROMETRY [LARGE SCALE ANALYSIS]</scope>
    <source>
        <tissue>Cervix carcinoma</tissue>
        <tissue>Erythroleukemia</tissue>
    </source>
</reference>
<reference key="7">
    <citation type="journal article" date="2014" name="J. Proteomics">
        <title>An enzyme assisted RP-RPLC approach for in-depth analysis of human liver phosphoproteome.</title>
        <authorList>
            <person name="Bian Y."/>
            <person name="Song C."/>
            <person name="Cheng K."/>
            <person name="Dong M."/>
            <person name="Wang F."/>
            <person name="Huang J."/>
            <person name="Sun D."/>
            <person name="Wang L."/>
            <person name="Ye M."/>
            <person name="Zou H."/>
        </authorList>
    </citation>
    <scope>PHOSPHORYLATION [LARGE SCALE ANALYSIS] AT SER-321</scope>
    <scope>IDENTIFICATION BY MASS SPECTROMETRY [LARGE SCALE ANALYSIS]</scope>
    <source>
        <tissue>Liver</tissue>
    </source>
</reference>
<reference key="8">
    <citation type="journal article" date="2016" name="Nat. Cell Biol.">
        <title>The leukodystrophy protein FAM126A (hyccin) regulates PtdIns(4)P synthesis at the plasma membrane.</title>
        <authorList>
            <person name="Baskin J.M."/>
            <person name="Wu X."/>
            <person name="Christiano R."/>
            <person name="Oh M.S."/>
            <person name="Schauder C.M."/>
            <person name="Gazzerro E."/>
            <person name="Messa M."/>
            <person name="Baldassari S."/>
            <person name="Assereto S."/>
            <person name="Biancheri R."/>
            <person name="Zara F."/>
            <person name="Minetti C."/>
            <person name="Raimondi A."/>
            <person name="Simons M."/>
            <person name="Walther T.C."/>
            <person name="Reinisch K.M."/>
            <person name="De Camilli P."/>
        </authorList>
    </citation>
    <scope>IDENTIFICATION IN THE PI4K COMPLEX</scope>
</reference>
<organism>
    <name type="scientific">Homo sapiens</name>
    <name type="common">Human</name>
    <dbReference type="NCBI Taxonomy" id="9606"/>
    <lineage>
        <taxon>Eukaryota</taxon>
        <taxon>Metazoa</taxon>
        <taxon>Chordata</taxon>
        <taxon>Craniata</taxon>
        <taxon>Vertebrata</taxon>
        <taxon>Euteleostomi</taxon>
        <taxon>Mammalia</taxon>
        <taxon>Eutheria</taxon>
        <taxon>Euarchontoglires</taxon>
        <taxon>Primates</taxon>
        <taxon>Haplorrhini</taxon>
        <taxon>Catarrhini</taxon>
        <taxon>Hominidae</taxon>
        <taxon>Homo</taxon>
    </lineage>
</organism>